<keyword id="KW-1203">Blood coagulation cascade inhibiting toxin</keyword>
<keyword id="KW-0106">Calcium</keyword>
<keyword id="KW-0903">Direct protein sequencing</keyword>
<keyword id="KW-1015">Disulfide bond</keyword>
<keyword id="KW-1199">Hemostasis impairing toxin</keyword>
<keyword id="KW-0378">Hydrolase</keyword>
<keyword id="KW-0442">Lipid degradation</keyword>
<keyword id="KW-0443">Lipid metabolism</keyword>
<keyword id="KW-0479">Metal-binding</keyword>
<keyword id="KW-1201">Platelet aggregation inhibiting toxin</keyword>
<keyword id="KW-0964">Secreted</keyword>
<keyword id="KW-0732">Signal</keyword>
<keyword id="KW-0800">Toxin</keyword>
<accession>Q2YHJ6</accession>
<accession>Q0VJ50</accession>
<protein>
    <recommendedName>
        <fullName>Acidic phospholipase A2 Tpu-E6a</fullName>
        <shortName>svPLA2</shortName>
        <ecNumber>3.1.1.4</ecNumber>
    </recommendedName>
    <alternativeName>
        <fullName>Phosphatidylcholine 2-acylhydrolase</fullName>
    </alternativeName>
</protein>
<reference key="1">
    <citation type="journal article" date="2005" name="FEBS J.">
        <title>Unusual venom phospholipases A2 of two primitive tree vipers Trimeresurus puniceus and Trimeresurus borneensis.</title>
        <authorList>
            <person name="Wang Y.-M."/>
            <person name="Peng H.-F."/>
            <person name="Tsai I.-H."/>
        </authorList>
    </citation>
    <scope>NUCLEOTIDE SEQUENCE [MRNA]</scope>
    <scope>PROTEIN SEQUENCE OF 17-39</scope>
    <scope>FUNCTION</scope>
    <scope>SUBUNIT</scope>
    <scope>MASS SPECTROMETRY</scope>
    <source>
        <tissue>Venom</tissue>
        <tissue>Venom gland</tissue>
    </source>
</reference>
<organism>
    <name type="scientific">Craspedocephalus puniceus</name>
    <name type="common">Flat-nosed pitviper</name>
    <name type="synonym">Trimeresurus puniceus</name>
    <dbReference type="NCBI Taxonomy" id="3147916"/>
    <lineage>
        <taxon>Eukaryota</taxon>
        <taxon>Metazoa</taxon>
        <taxon>Chordata</taxon>
        <taxon>Craniata</taxon>
        <taxon>Vertebrata</taxon>
        <taxon>Euteleostomi</taxon>
        <taxon>Lepidosauria</taxon>
        <taxon>Squamata</taxon>
        <taxon>Bifurcata</taxon>
        <taxon>Unidentata</taxon>
        <taxon>Episquamata</taxon>
        <taxon>Toxicofera</taxon>
        <taxon>Serpentes</taxon>
        <taxon>Colubroidea</taxon>
        <taxon>Viperidae</taxon>
        <taxon>Crotalinae</taxon>
        <taxon>Craspedocephalus</taxon>
    </lineage>
</organism>
<feature type="signal peptide" evidence="4">
    <location>
        <begin position="1"/>
        <end position="16"/>
    </location>
</feature>
<feature type="chain" id="PRO_0000419058" description="Acidic phospholipase A2 Tpu-E6a">
    <location>
        <begin position="17"/>
        <end position="138"/>
    </location>
</feature>
<feature type="active site" evidence="1">
    <location>
        <position position="63"/>
    </location>
</feature>
<feature type="active site" evidence="1">
    <location>
        <position position="105"/>
    </location>
</feature>
<feature type="binding site" evidence="1">
    <location>
        <position position="43"/>
    </location>
    <ligand>
        <name>Ca(2+)</name>
        <dbReference type="ChEBI" id="CHEBI:29108"/>
    </ligand>
</feature>
<feature type="binding site" evidence="1">
    <location>
        <position position="45"/>
    </location>
    <ligand>
        <name>Ca(2+)</name>
        <dbReference type="ChEBI" id="CHEBI:29108"/>
    </ligand>
</feature>
<feature type="binding site" evidence="1">
    <location>
        <position position="47"/>
    </location>
    <ligand>
        <name>Ca(2+)</name>
        <dbReference type="ChEBI" id="CHEBI:29108"/>
    </ligand>
</feature>
<feature type="binding site" evidence="1">
    <location>
        <position position="64"/>
    </location>
    <ligand>
        <name>Ca(2+)</name>
        <dbReference type="ChEBI" id="CHEBI:29108"/>
    </ligand>
</feature>
<feature type="disulfide bond" evidence="1">
    <location>
        <begin position="42"/>
        <end position="131"/>
    </location>
</feature>
<feature type="disulfide bond" evidence="1">
    <location>
        <begin position="44"/>
        <end position="60"/>
    </location>
</feature>
<feature type="disulfide bond" evidence="1">
    <location>
        <begin position="59"/>
        <end position="111"/>
    </location>
</feature>
<feature type="disulfide bond" evidence="1">
    <location>
        <begin position="65"/>
        <end position="138"/>
    </location>
</feature>
<feature type="disulfide bond" evidence="1">
    <location>
        <begin position="66"/>
        <end position="104"/>
    </location>
</feature>
<feature type="disulfide bond" evidence="1">
    <location>
        <begin position="73"/>
        <end position="97"/>
    </location>
</feature>
<feature type="disulfide bond" evidence="1">
    <location>
        <begin position="91"/>
        <end position="102"/>
    </location>
</feature>
<feature type="sequence conflict" description="In Ref. 1; AAR14170." evidence="5" ref="1">
    <original>L</original>
    <variation>M</variation>
    <location>
        <position position="23"/>
    </location>
</feature>
<evidence type="ECO:0000250" key="1"/>
<evidence type="ECO:0000255" key="2">
    <source>
        <dbReference type="PROSITE-ProRule" id="PRU10035"/>
    </source>
</evidence>
<evidence type="ECO:0000255" key="3">
    <source>
        <dbReference type="PROSITE-ProRule" id="PRU10036"/>
    </source>
</evidence>
<evidence type="ECO:0000269" key="4">
    <source>
    </source>
</evidence>
<evidence type="ECO:0000305" key="5"/>
<comment type="function">
    <text evidence="4">Snake venom phospholipase A2 (PLA2) that impairs hemostasis. It weakly inhibits ADP-induced platelet aggregation when tested on platelet rich plasma from human and rabbit blood (15-25% of inhibition at 5-10 ug of enzyme), and dose-dependently inhibits blood coagulation, possibly by inhibiting thrombin activation. Exhibits high hydrolytic activities toward L-dipalmitoyl phosphatidylcholine. PLA2 catalyzes the calcium-dependent hydrolysis of the 2-acyl groups in 3-sn-phosphoglycerides.</text>
</comment>
<comment type="catalytic activity">
    <reaction evidence="2 3">
        <text>a 1,2-diacyl-sn-glycero-3-phosphocholine + H2O = a 1-acyl-sn-glycero-3-phosphocholine + a fatty acid + H(+)</text>
        <dbReference type="Rhea" id="RHEA:15801"/>
        <dbReference type="ChEBI" id="CHEBI:15377"/>
        <dbReference type="ChEBI" id="CHEBI:15378"/>
        <dbReference type="ChEBI" id="CHEBI:28868"/>
        <dbReference type="ChEBI" id="CHEBI:57643"/>
        <dbReference type="ChEBI" id="CHEBI:58168"/>
        <dbReference type="EC" id="3.1.1.4"/>
    </reaction>
</comment>
<comment type="cofactor">
    <cofactor evidence="1">
        <name>Ca(2+)</name>
        <dbReference type="ChEBI" id="CHEBI:29108"/>
    </cofactor>
    <text evidence="1">Binds 1 Ca(2+) ion.</text>
</comment>
<comment type="subunit">
    <text evidence="4">Monomer.</text>
</comment>
<comment type="subcellular location">
    <subcellularLocation>
        <location>Secreted</location>
    </subcellularLocation>
</comment>
<comment type="tissue specificity">
    <text>Expressed by the venom gland.</text>
</comment>
<comment type="mass spectrometry"/>
<comment type="similarity">
    <text evidence="5">Belongs to the phospholipase A2 family. Group II subfamily. D49 sub-subfamily.</text>
</comment>
<proteinExistence type="evidence at protein level"/>
<dbReference type="EC" id="3.1.1.4"/>
<dbReference type="EMBL" id="AY355174">
    <property type="protein sequence ID" value="AAR14168.1"/>
    <property type="molecule type" value="mRNA"/>
</dbReference>
<dbReference type="EMBL" id="AY355176">
    <property type="protein sequence ID" value="AAR14170.1"/>
    <property type="molecule type" value="mRNA"/>
</dbReference>
<dbReference type="SMR" id="Q2YHJ6"/>
<dbReference type="GO" id="GO:0005576">
    <property type="term" value="C:extracellular region"/>
    <property type="evidence" value="ECO:0007669"/>
    <property type="project" value="UniProtKB-SubCell"/>
</dbReference>
<dbReference type="GO" id="GO:0005509">
    <property type="term" value="F:calcium ion binding"/>
    <property type="evidence" value="ECO:0007669"/>
    <property type="project" value="InterPro"/>
</dbReference>
<dbReference type="GO" id="GO:0047498">
    <property type="term" value="F:calcium-dependent phospholipase A2 activity"/>
    <property type="evidence" value="ECO:0007669"/>
    <property type="project" value="TreeGrafter"/>
</dbReference>
<dbReference type="GO" id="GO:0005543">
    <property type="term" value="F:phospholipid binding"/>
    <property type="evidence" value="ECO:0007669"/>
    <property type="project" value="TreeGrafter"/>
</dbReference>
<dbReference type="GO" id="GO:0090729">
    <property type="term" value="F:toxin activity"/>
    <property type="evidence" value="ECO:0007669"/>
    <property type="project" value="UniProtKB-KW"/>
</dbReference>
<dbReference type="GO" id="GO:0050482">
    <property type="term" value="P:arachidonate secretion"/>
    <property type="evidence" value="ECO:0007669"/>
    <property type="project" value="InterPro"/>
</dbReference>
<dbReference type="GO" id="GO:0016042">
    <property type="term" value="P:lipid catabolic process"/>
    <property type="evidence" value="ECO:0007669"/>
    <property type="project" value="UniProtKB-KW"/>
</dbReference>
<dbReference type="GO" id="GO:0006644">
    <property type="term" value="P:phospholipid metabolic process"/>
    <property type="evidence" value="ECO:0007669"/>
    <property type="project" value="InterPro"/>
</dbReference>
<dbReference type="CDD" id="cd00125">
    <property type="entry name" value="PLA2c"/>
    <property type="match status" value="1"/>
</dbReference>
<dbReference type="FunFam" id="1.20.90.10:FF:000001">
    <property type="entry name" value="Basic phospholipase A2 homolog"/>
    <property type="match status" value="1"/>
</dbReference>
<dbReference type="Gene3D" id="1.20.90.10">
    <property type="entry name" value="Phospholipase A2 domain"/>
    <property type="match status" value="1"/>
</dbReference>
<dbReference type="InterPro" id="IPR001211">
    <property type="entry name" value="PLipase_A2"/>
</dbReference>
<dbReference type="InterPro" id="IPR033112">
    <property type="entry name" value="PLipase_A2_Asp_AS"/>
</dbReference>
<dbReference type="InterPro" id="IPR016090">
    <property type="entry name" value="PLipase_A2_dom"/>
</dbReference>
<dbReference type="InterPro" id="IPR036444">
    <property type="entry name" value="PLipase_A2_dom_sf"/>
</dbReference>
<dbReference type="InterPro" id="IPR033113">
    <property type="entry name" value="PLipase_A2_His_AS"/>
</dbReference>
<dbReference type="PANTHER" id="PTHR11716:SF101">
    <property type="entry name" value="BASIC PHOSPHOLIPASE A2 PA-11-LIKE"/>
    <property type="match status" value="1"/>
</dbReference>
<dbReference type="PANTHER" id="PTHR11716">
    <property type="entry name" value="PHOSPHOLIPASE A2 FAMILY MEMBER"/>
    <property type="match status" value="1"/>
</dbReference>
<dbReference type="Pfam" id="PF00068">
    <property type="entry name" value="Phospholip_A2_1"/>
    <property type="match status" value="1"/>
</dbReference>
<dbReference type="PRINTS" id="PR00389">
    <property type="entry name" value="PHPHLIPASEA2"/>
</dbReference>
<dbReference type="SMART" id="SM00085">
    <property type="entry name" value="PA2c"/>
    <property type="match status" value="1"/>
</dbReference>
<dbReference type="SUPFAM" id="SSF48619">
    <property type="entry name" value="Phospholipase A2, PLA2"/>
    <property type="match status" value="1"/>
</dbReference>
<dbReference type="PROSITE" id="PS00119">
    <property type="entry name" value="PA2_ASP"/>
    <property type="match status" value="1"/>
</dbReference>
<dbReference type="PROSITE" id="PS00118">
    <property type="entry name" value="PA2_HIS"/>
    <property type="match status" value="1"/>
</dbReference>
<sequence>MRTLWIMAVLLLGVKGNLLQFELMIKKMSGRSGIRWYSDYGCYCGKGGHGQPQDATDRCCFVHDCCYGKVSGCDPKMAFYKYSSDNNDIVCGGNNPCLKEICECDRAAAICFRDNLSTYDNKYWNVPSETCQVESEPC</sequence>
<name>PA2AA_CRAPU</name>